<accession>B1YVE9</accession>
<protein>
    <recommendedName>
        <fullName evidence="1">Glycerol-3-phosphate acyltransferase</fullName>
    </recommendedName>
    <alternativeName>
        <fullName evidence="1">Acyl-PO4 G3P acyltransferase</fullName>
    </alternativeName>
    <alternativeName>
        <fullName evidence="1">Acyl-phosphate--glycerol-3-phosphate acyltransferase</fullName>
    </alternativeName>
    <alternativeName>
        <fullName evidence="1">G3P acyltransferase</fullName>
        <shortName evidence="1">GPAT</shortName>
        <ecNumber evidence="1">2.3.1.275</ecNumber>
    </alternativeName>
    <alternativeName>
        <fullName evidence="1">Lysophosphatidic acid synthase</fullName>
        <shortName evidence="1">LPA synthase</shortName>
    </alternativeName>
</protein>
<keyword id="KW-0997">Cell inner membrane</keyword>
<keyword id="KW-1003">Cell membrane</keyword>
<keyword id="KW-0444">Lipid biosynthesis</keyword>
<keyword id="KW-0443">Lipid metabolism</keyword>
<keyword id="KW-0472">Membrane</keyword>
<keyword id="KW-0594">Phospholipid biosynthesis</keyword>
<keyword id="KW-1208">Phospholipid metabolism</keyword>
<keyword id="KW-0808">Transferase</keyword>
<keyword id="KW-0812">Transmembrane</keyword>
<keyword id="KW-1133">Transmembrane helix</keyword>
<dbReference type="EC" id="2.3.1.275" evidence="1"/>
<dbReference type="EMBL" id="CP001025">
    <property type="protein sequence ID" value="ACB64953.1"/>
    <property type="molecule type" value="Genomic_DNA"/>
</dbReference>
<dbReference type="RefSeq" id="WP_012364549.1">
    <property type="nucleotide sequence ID" value="NC_010551.1"/>
</dbReference>
<dbReference type="SMR" id="B1YVE9"/>
<dbReference type="KEGG" id="bac:BamMC406_2475"/>
<dbReference type="HOGENOM" id="CLU_081254_0_0_4"/>
<dbReference type="OrthoDB" id="9777124at2"/>
<dbReference type="UniPathway" id="UPA00085"/>
<dbReference type="Proteomes" id="UP000001680">
    <property type="component" value="Chromosome 1"/>
</dbReference>
<dbReference type="GO" id="GO:0005886">
    <property type="term" value="C:plasma membrane"/>
    <property type="evidence" value="ECO:0007669"/>
    <property type="project" value="UniProtKB-SubCell"/>
</dbReference>
<dbReference type="GO" id="GO:0043772">
    <property type="term" value="F:acyl-phosphate glycerol-3-phosphate acyltransferase activity"/>
    <property type="evidence" value="ECO:0007669"/>
    <property type="project" value="UniProtKB-UniRule"/>
</dbReference>
<dbReference type="GO" id="GO:0008654">
    <property type="term" value="P:phospholipid biosynthetic process"/>
    <property type="evidence" value="ECO:0007669"/>
    <property type="project" value="UniProtKB-UniRule"/>
</dbReference>
<dbReference type="HAMAP" id="MF_01043">
    <property type="entry name" value="PlsY"/>
    <property type="match status" value="1"/>
</dbReference>
<dbReference type="InterPro" id="IPR003811">
    <property type="entry name" value="G3P_acylTferase_PlsY"/>
</dbReference>
<dbReference type="NCBIfam" id="TIGR00023">
    <property type="entry name" value="glycerol-3-phosphate 1-O-acyltransferase PlsY"/>
    <property type="match status" value="1"/>
</dbReference>
<dbReference type="PANTHER" id="PTHR30309:SF0">
    <property type="entry name" value="GLYCEROL-3-PHOSPHATE ACYLTRANSFERASE-RELATED"/>
    <property type="match status" value="1"/>
</dbReference>
<dbReference type="PANTHER" id="PTHR30309">
    <property type="entry name" value="INNER MEMBRANE PROTEIN YGIH"/>
    <property type="match status" value="1"/>
</dbReference>
<dbReference type="Pfam" id="PF02660">
    <property type="entry name" value="G3P_acyltransf"/>
    <property type="match status" value="1"/>
</dbReference>
<dbReference type="SMART" id="SM01207">
    <property type="entry name" value="G3P_acyltransf"/>
    <property type="match status" value="1"/>
</dbReference>
<sequence length="212" mass="22313">MQILLAALVAYLIGSVSFAVVVSAAMGLADPRSYGSKNPGATNVLRSGNKKAAILTLVGDAFKGWLAVWLARHFGLPDVAVAWVAIAVFLGHLYPVFFRFQGGKGVATAAGVLLAVHPVLGLATALTWLIVAFFFRYSSLAALVAAVFAPLFDVFLFGTRHNPVAWAVLAMSVLLVWRHRGNISKLLAGQESRIGDKKKAAANGGAQDGGKL</sequence>
<comment type="function">
    <text evidence="1">Catalyzes the transfer of an acyl group from acyl-phosphate (acyl-PO(4)) to glycerol-3-phosphate (G3P) to form lysophosphatidic acid (LPA). This enzyme utilizes acyl-phosphate as fatty acyl donor, but not acyl-CoA or acyl-ACP.</text>
</comment>
<comment type="catalytic activity">
    <reaction evidence="1">
        <text>an acyl phosphate + sn-glycerol 3-phosphate = a 1-acyl-sn-glycero-3-phosphate + phosphate</text>
        <dbReference type="Rhea" id="RHEA:34075"/>
        <dbReference type="ChEBI" id="CHEBI:43474"/>
        <dbReference type="ChEBI" id="CHEBI:57597"/>
        <dbReference type="ChEBI" id="CHEBI:57970"/>
        <dbReference type="ChEBI" id="CHEBI:59918"/>
        <dbReference type="EC" id="2.3.1.275"/>
    </reaction>
</comment>
<comment type="pathway">
    <text evidence="1">Lipid metabolism; phospholipid metabolism.</text>
</comment>
<comment type="subunit">
    <text evidence="1">Probably interacts with PlsX.</text>
</comment>
<comment type="subcellular location">
    <subcellularLocation>
        <location evidence="1">Cell inner membrane</location>
        <topology evidence="1">Multi-pass membrane protein</topology>
    </subcellularLocation>
</comment>
<comment type="similarity">
    <text evidence="1">Belongs to the PlsY family.</text>
</comment>
<evidence type="ECO:0000255" key="1">
    <source>
        <dbReference type="HAMAP-Rule" id="MF_01043"/>
    </source>
</evidence>
<reference key="1">
    <citation type="submission" date="2008-04" db="EMBL/GenBank/DDBJ databases">
        <title>Complete sequence of chromosome 1 of Burkholderia ambifaria MC40-6.</title>
        <authorList>
            <person name="Copeland A."/>
            <person name="Lucas S."/>
            <person name="Lapidus A."/>
            <person name="Glavina del Rio T."/>
            <person name="Dalin E."/>
            <person name="Tice H."/>
            <person name="Pitluck S."/>
            <person name="Chain P."/>
            <person name="Malfatti S."/>
            <person name="Shin M."/>
            <person name="Vergez L."/>
            <person name="Lang D."/>
            <person name="Schmutz J."/>
            <person name="Larimer F."/>
            <person name="Land M."/>
            <person name="Hauser L."/>
            <person name="Kyrpides N."/>
            <person name="Lykidis A."/>
            <person name="Ramette A."/>
            <person name="Konstantinidis K."/>
            <person name="Tiedje J."/>
            <person name="Richardson P."/>
        </authorList>
    </citation>
    <scope>NUCLEOTIDE SEQUENCE [LARGE SCALE GENOMIC DNA]</scope>
    <source>
        <strain>MC40-6</strain>
    </source>
</reference>
<organism>
    <name type="scientific">Burkholderia ambifaria (strain MC40-6)</name>
    <dbReference type="NCBI Taxonomy" id="398577"/>
    <lineage>
        <taxon>Bacteria</taxon>
        <taxon>Pseudomonadati</taxon>
        <taxon>Pseudomonadota</taxon>
        <taxon>Betaproteobacteria</taxon>
        <taxon>Burkholderiales</taxon>
        <taxon>Burkholderiaceae</taxon>
        <taxon>Burkholderia</taxon>
        <taxon>Burkholderia cepacia complex</taxon>
    </lineage>
</organism>
<feature type="chain" id="PRO_1000136067" description="Glycerol-3-phosphate acyltransferase">
    <location>
        <begin position="1"/>
        <end position="212"/>
    </location>
</feature>
<feature type="transmembrane region" description="Helical" evidence="1">
    <location>
        <begin position="3"/>
        <end position="23"/>
    </location>
</feature>
<feature type="transmembrane region" description="Helical" evidence="1">
    <location>
        <begin position="51"/>
        <end position="71"/>
    </location>
</feature>
<feature type="transmembrane region" description="Helical" evidence="1">
    <location>
        <begin position="78"/>
        <end position="98"/>
    </location>
</feature>
<feature type="transmembrane region" description="Helical" evidence="1">
    <location>
        <begin position="115"/>
        <end position="135"/>
    </location>
</feature>
<feature type="transmembrane region" description="Helical" evidence="1">
    <location>
        <begin position="139"/>
        <end position="159"/>
    </location>
</feature>
<name>PLSY_BURA4</name>
<gene>
    <name evidence="1" type="primary">plsY</name>
    <name type="ordered locus">BamMC406_2475</name>
</gene>
<proteinExistence type="inferred from homology"/>